<accession>Q06RB4</accession>
<keyword id="KW-0150">Chloroplast</keyword>
<keyword id="KW-0249">Electron transport</keyword>
<keyword id="KW-0472">Membrane</keyword>
<keyword id="KW-0602">Photosynthesis</keyword>
<keyword id="KW-0934">Plastid</keyword>
<keyword id="KW-0793">Thylakoid</keyword>
<keyword id="KW-0812">Transmembrane</keyword>
<keyword id="KW-1133">Transmembrane helix</keyword>
<keyword id="KW-0813">Transport</keyword>
<organism>
    <name type="scientific">Jasminum nudiflorum</name>
    <name type="common">Winter jasmine</name>
    <dbReference type="NCBI Taxonomy" id="126431"/>
    <lineage>
        <taxon>Eukaryota</taxon>
        <taxon>Viridiplantae</taxon>
        <taxon>Streptophyta</taxon>
        <taxon>Embryophyta</taxon>
        <taxon>Tracheophyta</taxon>
        <taxon>Spermatophyta</taxon>
        <taxon>Magnoliopsida</taxon>
        <taxon>eudicotyledons</taxon>
        <taxon>Gunneridae</taxon>
        <taxon>Pentapetalae</taxon>
        <taxon>asterids</taxon>
        <taxon>lamiids</taxon>
        <taxon>Lamiales</taxon>
        <taxon>Oleaceae</taxon>
        <taxon>Jasmineae</taxon>
        <taxon>Jasminum</taxon>
    </lineage>
</organism>
<geneLocation type="chloroplast"/>
<comment type="function">
    <text evidence="1">Component of the cytochrome b6-f complex, which mediates electron transfer between photosystem II (PSII) and photosystem I (PSI), cyclic electron flow around PSI, and state transitions. PetL is important for photoautotrophic growth as well as for electron transfer efficiency and stability of the cytochrome b6-f complex.</text>
</comment>
<comment type="subunit">
    <text evidence="1">The 4 large subunits of the cytochrome b6-f complex are cytochrome b6, subunit IV (17 kDa polypeptide, PetD), cytochrome f and the Rieske protein, while the 4 small subunits are PetG, PetL, PetM and PetN. The complex functions as a dimer.</text>
</comment>
<comment type="subcellular location">
    <subcellularLocation>
        <location evidence="1">Plastid</location>
        <location evidence="1">Chloroplast thylakoid membrane</location>
        <topology evidence="1">Single-pass membrane protein</topology>
    </subcellularLocation>
</comment>
<comment type="similarity">
    <text evidence="1">Belongs to the PetL family.</text>
</comment>
<proteinExistence type="inferred from homology"/>
<evidence type="ECO:0000255" key="1">
    <source>
        <dbReference type="HAMAP-Rule" id="MF_00433"/>
    </source>
</evidence>
<protein>
    <recommendedName>
        <fullName evidence="1">Cytochrome b6-f complex subunit 6</fullName>
    </recommendedName>
    <alternativeName>
        <fullName evidence="1">Cytochrome b6-f complex subunit PetL</fullName>
    </alternativeName>
    <alternativeName>
        <fullName evidence="1">Cytochrome b6-f complex subunit VI</fullName>
    </alternativeName>
</protein>
<dbReference type="EMBL" id="DQ673255">
    <property type="protein sequence ID" value="ABG74645.1"/>
    <property type="molecule type" value="Genomic_DNA"/>
</dbReference>
<dbReference type="RefSeq" id="YP_778507.1">
    <property type="nucleotide sequence ID" value="NC_008407.1"/>
</dbReference>
<dbReference type="SMR" id="Q06RB4"/>
<dbReference type="GeneID" id="4319776"/>
<dbReference type="GO" id="GO:0009535">
    <property type="term" value="C:chloroplast thylakoid membrane"/>
    <property type="evidence" value="ECO:0007669"/>
    <property type="project" value="UniProtKB-SubCell"/>
</dbReference>
<dbReference type="GO" id="GO:0009512">
    <property type="term" value="C:cytochrome b6f complex"/>
    <property type="evidence" value="ECO:0007669"/>
    <property type="project" value="InterPro"/>
</dbReference>
<dbReference type="GO" id="GO:0045158">
    <property type="term" value="F:electron transporter, transferring electrons within cytochrome b6/f complex of photosystem II activity"/>
    <property type="evidence" value="ECO:0007669"/>
    <property type="project" value="UniProtKB-UniRule"/>
</dbReference>
<dbReference type="GO" id="GO:0015979">
    <property type="term" value="P:photosynthesis"/>
    <property type="evidence" value="ECO:0007669"/>
    <property type="project" value="UniProtKB-KW"/>
</dbReference>
<dbReference type="HAMAP" id="MF_00433">
    <property type="entry name" value="Cytb6_f_PetL"/>
    <property type="match status" value="1"/>
</dbReference>
<dbReference type="InterPro" id="IPR007802">
    <property type="entry name" value="Cyt_b6/f_cplx_su6"/>
</dbReference>
<dbReference type="PANTHER" id="PTHR37266">
    <property type="entry name" value="CYTOCHROME B6-F COMPLEX SUBUNIT 6"/>
    <property type="match status" value="1"/>
</dbReference>
<dbReference type="PANTHER" id="PTHR37266:SF1">
    <property type="entry name" value="CYTOCHROME B6-F COMPLEX SUBUNIT 6"/>
    <property type="match status" value="1"/>
</dbReference>
<dbReference type="Pfam" id="PF05115">
    <property type="entry name" value="PetL"/>
    <property type="match status" value="1"/>
</dbReference>
<reference key="1">
    <citation type="journal article" date="2007" name="Mol. Biol. Evol.">
        <title>Gene relocations within chloroplast genomes of Jasminum and Menodora (Oleaceae) are due to multiple, overlapping inversions.</title>
        <authorList>
            <person name="Lee H.-L."/>
            <person name="Jansen R.K."/>
            <person name="Chumley T.W."/>
            <person name="Kim K.-J."/>
        </authorList>
    </citation>
    <scope>NUCLEOTIDE SEQUENCE [LARGE SCALE GENOMIC DNA]</scope>
</reference>
<gene>
    <name evidence="1" type="primary">petL</name>
    <name type="ORF">JNC0716</name>
</gene>
<feature type="chain" id="PRO_0000275527" description="Cytochrome b6-f complex subunit 6">
    <location>
        <begin position="1"/>
        <end position="31"/>
    </location>
</feature>
<feature type="transmembrane region" description="Helical" evidence="1">
    <location>
        <begin position="4"/>
        <end position="24"/>
    </location>
</feature>
<name>PETL_JASNU</name>
<sequence length="31" mass="3445">MLTITSYFGFLLVVLTITSALFIGLSKIRLI</sequence>